<feature type="chain" id="PRO_0000251461" description="Ribulose bisphosphate carboxylase large chain">
    <location>
        <begin position="1"/>
        <end position="474"/>
    </location>
</feature>
<feature type="active site" description="Proton acceptor" evidence="1">
    <location>
        <position position="174"/>
    </location>
</feature>
<feature type="active site" description="Proton acceptor" evidence="1">
    <location>
        <position position="293"/>
    </location>
</feature>
<feature type="binding site" description="in homodimeric partner" evidence="1">
    <location>
        <position position="122"/>
    </location>
    <ligand>
        <name>substrate</name>
    </ligand>
</feature>
<feature type="binding site" evidence="1">
    <location>
        <position position="172"/>
    </location>
    <ligand>
        <name>substrate</name>
    </ligand>
</feature>
<feature type="binding site" evidence="1">
    <location>
        <position position="176"/>
    </location>
    <ligand>
        <name>substrate</name>
    </ligand>
</feature>
<feature type="binding site" description="via carbamate group" evidence="1">
    <location>
        <position position="200"/>
    </location>
    <ligand>
        <name>Mg(2+)</name>
        <dbReference type="ChEBI" id="CHEBI:18420"/>
    </ligand>
</feature>
<feature type="binding site" evidence="1">
    <location>
        <position position="202"/>
    </location>
    <ligand>
        <name>Mg(2+)</name>
        <dbReference type="ChEBI" id="CHEBI:18420"/>
    </ligand>
</feature>
<feature type="binding site" evidence="1">
    <location>
        <position position="203"/>
    </location>
    <ligand>
        <name>Mg(2+)</name>
        <dbReference type="ChEBI" id="CHEBI:18420"/>
    </ligand>
</feature>
<feature type="binding site" evidence="1">
    <location>
        <position position="294"/>
    </location>
    <ligand>
        <name>substrate</name>
    </ligand>
</feature>
<feature type="binding site" evidence="1">
    <location>
        <position position="326"/>
    </location>
    <ligand>
        <name>substrate</name>
    </ligand>
</feature>
<feature type="binding site" evidence="1">
    <location>
        <position position="378"/>
    </location>
    <ligand>
        <name>substrate</name>
    </ligand>
</feature>
<feature type="site" description="Transition state stabilizer" evidence="1">
    <location>
        <position position="333"/>
    </location>
</feature>
<feature type="modified residue" description="N6-carboxylysine" evidence="1">
    <location>
        <position position="200"/>
    </location>
</feature>
<feature type="disulfide bond" description="Interchain; in linked form" evidence="1">
    <location>
        <position position="246"/>
    </location>
</feature>
<accession>Q2JV67</accession>
<organism>
    <name type="scientific">Synechococcus sp. (strain JA-3-3Ab)</name>
    <name type="common">Cyanobacteria bacterium Yellowstone A-Prime</name>
    <dbReference type="NCBI Taxonomy" id="321327"/>
    <lineage>
        <taxon>Bacteria</taxon>
        <taxon>Bacillati</taxon>
        <taxon>Cyanobacteriota</taxon>
        <taxon>Cyanophyceae</taxon>
        <taxon>Synechococcales</taxon>
        <taxon>Synechococcaceae</taxon>
        <taxon>Synechococcus</taxon>
    </lineage>
</organism>
<gene>
    <name evidence="1" type="primary">cbbL</name>
    <name evidence="1" type="synonym">rbcL</name>
    <name type="ordered locus">CYA_1194</name>
</gene>
<evidence type="ECO:0000255" key="1">
    <source>
        <dbReference type="HAMAP-Rule" id="MF_01338"/>
    </source>
</evidence>
<protein>
    <recommendedName>
        <fullName evidence="1">Ribulose bisphosphate carboxylase large chain</fullName>
        <shortName evidence="1">RuBisCO large subunit</shortName>
        <ecNumber evidence="1">4.1.1.39</ecNumber>
    </recommendedName>
</protein>
<sequence length="474" mass="52804">MAYSATQTKKGYQAGVKDYRLTYYTPDYTPKDTDVLACFRVTPQPGVPPEEAGAAVAAESSTGTWTTVWTDLLTDLDRYKGRCYDIEPVPGEENQYFCFVAYPLDLFEEGSVTNMLTSIVGNVFGFKALKALRLEDVRIPVAYLKTFQGPPHGIQVERDKLNKYGRPLLGCTIKPKLGLSAKNYGRAVYEALRGGLDFTKDDENINSQPFQRWRDRYLFVMEAVHKAQAETGEIKGHYLNVTAPTCEEMFKRAEFAKEIGAPIIMHDYLTAGFTANTSLAKWCRDNGILLHIHRAMHAVIDRQKNHGIHFRVLAKCLRMSGGDHLHAGTVVGKLEGDRAITMGFVDLMRENYVEADRSRGIFFTQDWASMPGVMPVASGGIHVWHMPALVEIFGDDAVLQFGGGTLGHPWGNAPGATANRVALEACIQARNEGRDLAREGNEIIREAAKWSPELAAACELWKEIKFEFKPVDTL</sequence>
<comment type="function">
    <text evidence="1">RuBisCO catalyzes two reactions: the carboxylation of D-ribulose 1,5-bisphosphate, the primary event in carbon dioxide fixation, as well as the oxidative fragmentation of the pentose substrate in the photorespiration process. Both reactions occur simultaneously and in competition at the same active site.</text>
</comment>
<comment type="catalytic activity">
    <reaction evidence="1">
        <text>2 (2R)-3-phosphoglycerate + 2 H(+) = D-ribulose 1,5-bisphosphate + CO2 + H2O</text>
        <dbReference type="Rhea" id="RHEA:23124"/>
        <dbReference type="ChEBI" id="CHEBI:15377"/>
        <dbReference type="ChEBI" id="CHEBI:15378"/>
        <dbReference type="ChEBI" id="CHEBI:16526"/>
        <dbReference type="ChEBI" id="CHEBI:57870"/>
        <dbReference type="ChEBI" id="CHEBI:58272"/>
        <dbReference type="EC" id="4.1.1.39"/>
    </reaction>
</comment>
<comment type="catalytic activity">
    <reaction evidence="1">
        <text>D-ribulose 1,5-bisphosphate + O2 = 2-phosphoglycolate + (2R)-3-phosphoglycerate + 2 H(+)</text>
        <dbReference type="Rhea" id="RHEA:36631"/>
        <dbReference type="ChEBI" id="CHEBI:15378"/>
        <dbReference type="ChEBI" id="CHEBI:15379"/>
        <dbReference type="ChEBI" id="CHEBI:57870"/>
        <dbReference type="ChEBI" id="CHEBI:58033"/>
        <dbReference type="ChEBI" id="CHEBI:58272"/>
    </reaction>
</comment>
<comment type="cofactor">
    <cofactor evidence="1">
        <name>Mg(2+)</name>
        <dbReference type="ChEBI" id="CHEBI:18420"/>
    </cofactor>
    <text evidence="1">Binds 1 Mg(2+) ion per subunit.</text>
</comment>
<comment type="subunit">
    <text evidence="1">Heterohexadecamer of 8 large chains and 8 small chains; disulfide-linked. The disulfide link is formed within the large subunit homodimers.</text>
</comment>
<comment type="subcellular location">
    <subcellularLocation>
        <location evidence="1">Carboxysome</location>
    </subcellularLocation>
</comment>
<comment type="PTM">
    <text evidence="1">The disulfide bond which can form in the large chain dimeric partners within the hexadecamer appears to be associated with oxidative stress and protein turnover.</text>
</comment>
<comment type="miscellaneous">
    <text evidence="1">The basic functional RuBisCO is composed of a large chain homodimer in a 'head-to-tail' conformation. In form I RuBisCO this homodimer is arranged in a barrel-like tetramer with the small subunits forming a tetrameric 'cap' on each end of the 'barrel'.</text>
</comment>
<comment type="similarity">
    <text evidence="1">Belongs to the RuBisCO large chain family. Type I subfamily.</text>
</comment>
<reference key="1">
    <citation type="journal article" date="2007" name="ISME J.">
        <title>Population level functional diversity in a microbial community revealed by comparative genomic and metagenomic analyses.</title>
        <authorList>
            <person name="Bhaya D."/>
            <person name="Grossman A.R."/>
            <person name="Steunou A.-S."/>
            <person name="Khuri N."/>
            <person name="Cohan F.M."/>
            <person name="Hamamura N."/>
            <person name="Melendrez M.C."/>
            <person name="Bateson M.M."/>
            <person name="Ward D.M."/>
            <person name="Heidelberg J.F."/>
        </authorList>
    </citation>
    <scope>NUCLEOTIDE SEQUENCE [LARGE SCALE GENOMIC DNA]</scope>
    <source>
        <strain>JA-3-3Ab</strain>
    </source>
</reference>
<proteinExistence type="inferred from homology"/>
<dbReference type="EC" id="4.1.1.39" evidence="1"/>
<dbReference type="EMBL" id="CP000239">
    <property type="protein sequence ID" value="ABC99380.1"/>
    <property type="molecule type" value="Genomic_DNA"/>
</dbReference>
<dbReference type="SMR" id="Q2JV67"/>
<dbReference type="STRING" id="321327.CYA_1194"/>
<dbReference type="KEGG" id="cya:CYA_1194"/>
<dbReference type="eggNOG" id="COG1850">
    <property type="taxonomic scope" value="Bacteria"/>
</dbReference>
<dbReference type="HOGENOM" id="CLU_031450_2_0_3"/>
<dbReference type="Proteomes" id="UP000008818">
    <property type="component" value="Chromosome"/>
</dbReference>
<dbReference type="GO" id="GO:0031470">
    <property type="term" value="C:carboxysome"/>
    <property type="evidence" value="ECO:0007669"/>
    <property type="project" value="UniProtKB-SubCell"/>
</dbReference>
<dbReference type="GO" id="GO:0000287">
    <property type="term" value="F:magnesium ion binding"/>
    <property type="evidence" value="ECO:0007669"/>
    <property type="project" value="UniProtKB-UniRule"/>
</dbReference>
<dbReference type="GO" id="GO:0004497">
    <property type="term" value="F:monooxygenase activity"/>
    <property type="evidence" value="ECO:0007669"/>
    <property type="project" value="UniProtKB-KW"/>
</dbReference>
<dbReference type="GO" id="GO:0016984">
    <property type="term" value="F:ribulose-bisphosphate carboxylase activity"/>
    <property type="evidence" value="ECO:0007669"/>
    <property type="project" value="UniProtKB-UniRule"/>
</dbReference>
<dbReference type="GO" id="GO:0009853">
    <property type="term" value="P:photorespiration"/>
    <property type="evidence" value="ECO:0007669"/>
    <property type="project" value="UniProtKB-KW"/>
</dbReference>
<dbReference type="GO" id="GO:0019253">
    <property type="term" value="P:reductive pentose-phosphate cycle"/>
    <property type="evidence" value="ECO:0007669"/>
    <property type="project" value="UniProtKB-UniRule"/>
</dbReference>
<dbReference type="CDD" id="cd08212">
    <property type="entry name" value="RuBisCO_large_I"/>
    <property type="match status" value="1"/>
</dbReference>
<dbReference type="Gene3D" id="3.20.20.110">
    <property type="entry name" value="Ribulose bisphosphate carboxylase, large subunit, C-terminal domain"/>
    <property type="match status" value="1"/>
</dbReference>
<dbReference type="Gene3D" id="3.30.70.150">
    <property type="entry name" value="RuBisCO large subunit, N-terminal domain"/>
    <property type="match status" value="1"/>
</dbReference>
<dbReference type="HAMAP" id="MF_01338">
    <property type="entry name" value="RuBisCO_L_type1"/>
    <property type="match status" value="1"/>
</dbReference>
<dbReference type="InterPro" id="IPR033966">
    <property type="entry name" value="RuBisCO"/>
</dbReference>
<dbReference type="InterPro" id="IPR020878">
    <property type="entry name" value="RuBisCo_large_chain_AS"/>
</dbReference>
<dbReference type="InterPro" id="IPR000685">
    <property type="entry name" value="RuBisCO_lsu_C"/>
</dbReference>
<dbReference type="InterPro" id="IPR036376">
    <property type="entry name" value="RuBisCO_lsu_C_sf"/>
</dbReference>
<dbReference type="InterPro" id="IPR017443">
    <property type="entry name" value="RuBisCO_lsu_fd_N"/>
</dbReference>
<dbReference type="InterPro" id="IPR036422">
    <property type="entry name" value="RuBisCO_lsu_N_sf"/>
</dbReference>
<dbReference type="InterPro" id="IPR020888">
    <property type="entry name" value="RuBisCO_lsuI"/>
</dbReference>
<dbReference type="NCBIfam" id="NF003252">
    <property type="entry name" value="PRK04208.1"/>
    <property type="match status" value="1"/>
</dbReference>
<dbReference type="PANTHER" id="PTHR42704">
    <property type="entry name" value="RIBULOSE BISPHOSPHATE CARBOXYLASE"/>
    <property type="match status" value="1"/>
</dbReference>
<dbReference type="PANTHER" id="PTHR42704:SF17">
    <property type="entry name" value="RIBULOSE BISPHOSPHATE CARBOXYLASE LARGE CHAIN"/>
    <property type="match status" value="1"/>
</dbReference>
<dbReference type="Pfam" id="PF00016">
    <property type="entry name" value="RuBisCO_large"/>
    <property type="match status" value="1"/>
</dbReference>
<dbReference type="Pfam" id="PF02788">
    <property type="entry name" value="RuBisCO_large_N"/>
    <property type="match status" value="1"/>
</dbReference>
<dbReference type="SFLD" id="SFLDG01052">
    <property type="entry name" value="RuBisCO"/>
    <property type="match status" value="1"/>
</dbReference>
<dbReference type="SFLD" id="SFLDS00014">
    <property type="entry name" value="RuBisCO"/>
    <property type="match status" value="1"/>
</dbReference>
<dbReference type="SFLD" id="SFLDG00301">
    <property type="entry name" value="RuBisCO-like_proteins"/>
    <property type="match status" value="1"/>
</dbReference>
<dbReference type="SUPFAM" id="SSF51649">
    <property type="entry name" value="RuBisCo, C-terminal domain"/>
    <property type="match status" value="1"/>
</dbReference>
<dbReference type="SUPFAM" id="SSF54966">
    <property type="entry name" value="RuBisCO, large subunit, small (N-terminal) domain"/>
    <property type="match status" value="1"/>
</dbReference>
<dbReference type="PROSITE" id="PS00157">
    <property type="entry name" value="RUBISCO_LARGE"/>
    <property type="match status" value="1"/>
</dbReference>
<name>RBL_SYNJA</name>
<keyword id="KW-1283">Bacterial microcompartment</keyword>
<keyword id="KW-0113">Calvin cycle</keyword>
<keyword id="KW-0120">Carbon dioxide fixation</keyword>
<keyword id="KW-1282">Carboxysome</keyword>
<keyword id="KW-1015">Disulfide bond</keyword>
<keyword id="KW-0456">Lyase</keyword>
<keyword id="KW-0460">Magnesium</keyword>
<keyword id="KW-0479">Metal-binding</keyword>
<keyword id="KW-0503">Monooxygenase</keyword>
<keyword id="KW-0560">Oxidoreductase</keyword>
<keyword id="KW-0601">Photorespiration</keyword>
<keyword id="KW-0602">Photosynthesis</keyword>